<organism>
    <name type="scientific">Staphylococcus aureus (strain USA300)</name>
    <dbReference type="NCBI Taxonomy" id="367830"/>
    <lineage>
        <taxon>Bacteria</taxon>
        <taxon>Bacillati</taxon>
        <taxon>Bacillota</taxon>
        <taxon>Bacilli</taxon>
        <taxon>Bacillales</taxon>
        <taxon>Staphylococcaceae</taxon>
        <taxon>Staphylococcus</taxon>
    </lineage>
</organism>
<name>YIDD_STAA3</name>
<reference key="1">
    <citation type="journal article" date="2006" name="Lancet">
        <title>Complete genome sequence of USA300, an epidemic clone of community-acquired meticillin-resistant Staphylococcus aureus.</title>
        <authorList>
            <person name="Diep B.A."/>
            <person name="Gill S.R."/>
            <person name="Chang R.F."/>
            <person name="Phan T.H."/>
            <person name="Chen J.H."/>
            <person name="Davidson M.G."/>
            <person name="Lin F."/>
            <person name="Lin J."/>
            <person name="Carleton H.A."/>
            <person name="Mongodin E.F."/>
            <person name="Sensabaugh G.F."/>
            <person name="Perdreau-Remington F."/>
        </authorList>
    </citation>
    <scope>NUCLEOTIDE SEQUENCE [LARGE SCALE GENOMIC DNA]</scope>
    <source>
        <strain>USA300</strain>
    </source>
</reference>
<feature type="chain" id="PRO_0000253175" description="Putative membrane protein insertion efficiency factor">
    <location>
        <begin position="1"/>
        <end position="85"/>
    </location>
</feature>
<feature type="region of interest" description="Disordered" evidence="2">
    <location>
        <begin position="62"/>
        <end position="85"/>
    </location>
</feature>
<comment type="function">
    <text evidence="1">Could be involved in insertion of integral membrane proteins into the membrane.</text>
</comment>
<comment type="subcellular location">
    <subcellularLocation>
        <location evidence="1">Cell membrane</location>
        <topology evidence="1">Peripheral membrane protein</topology>
        <orientation evidence="1">Cytoplasmic side</orientation>
    </subcellularLocation>
</comment>
<comment type="similarity">
    <text evidence="1">Belongs to the UPF0161 family.</text>
</comment>
<gene>
    <name type="ordered locus">SAUSA300_1736</name>
</gene>
<dbReference type="EMBL" id="CP000255">
    <property type="protein sequence ID" value="ABD21061.1"/>
    <property type="molecule type" value="Genomic_DNA"/>
</dbReference>
<dbReference type="KEGG" id="saa:SAUSA300_1736"/>
<dbReference type="HOGENOM" id="CLU_144811_6_0_9"/>
<dbReference type="OMA" id="FHPGGHD"/>
<dbReference type="Proteomes" id="UP000001939">
    <property type="component" value="Chromosome"/>
</dbReference>
<dbReference type="GO" id="GO:0005886">
    <property type="term" value="C:plasma membrane"/>
    <property type="evidence" value="ECO:0007669"/>
    <property type="project" value="UniProtKB-SubCell"/>
</dbReference>
<dbReference type="HAMAP" id="MF_00386">
    <property type="entry name" value="UPF0161_YidD"/>
    <property type="match status" value="1"/>
</dbReference>
<dbReference type="InterPro" id="IPR002696">
    <property type="entry name" value="Membr_insert_effic_factor_YidD"/>
</dbReference>
<dbReference type="NCBIfam" id="TIGR00278">
    <property type="entry name" value="membrane protein insertion efficiency factor YidD"/>
    <property type="match status" value="1"/>
</dbReference>
<dbReference type="PANTHER" id="PTHR33383">
    <property type="entry name" value="MEMBRANE PROTEIN INSERTION EFFICIENCY FACTOR-RELATED"/>
    <property type="match status" value="1"/>
</dbReference>
<dbReference type="PANTHER" id="PTHR33383:SF1">
    <property type="entry name" value="MEMBRANE PROTEIN INSERTION EFFICIENCY FACTOR-RELATED"/>
    <property type="match status" value="1"/>
</dbReference>
<dbReference type="Pfam" id="PF01809">
    <property type="entry name" value="YidD"/>
    <property type="match status" value="1"/>
</dbReference>
<dbReference type="SMART" id="SM01234">
    <property type="entry name" value="Haemolytic"/>
    <property type="match status" value="1"/>
</dbReference>
<proteinExistence type="inferred from homology"/>
<sequence length="85" mass="9967">MKKIFLAMIHFYQRFISPLTPPTCRFYPTCSEYTREAIQYHGAFKGLYLGIRRILKCHPLHKGGFDPVPLKKDKSASKHSHKHNH</sequence>
<protein>
    <recommendedName>
        <fullName evidence="1">Putative membrane protein insertion efficiency factor</fullName>
    </recommendedName>
</protein>
<accession>Q2FFV1</accession>
<keyword id="KW-1003">Cell membrane</keyword>
<keyword id="KW-0472">Membrane</keyword>
<evidence type="ECO:0000255" key="1">
    <source>
        <dbReference type="HAMAP-Rule" id="MF_00386"/>
    </source>
</evidence>
<evidence type="ECO:0000256" key="2">
    <source>
        <dbReference type="SAM" id="MobiDB-lite"/>
    </source>
</evidence>